<geneLocation type="chloroplast"/>
<comment type="subcellular location">
    <subcellularLocation>
        <location>Plastid</location>
        <location>Chloroplast</location>
    </subcellularLocation>
</comment>
<comment type="similarity">
    <text evidence="1">Belongs to the bacterial ribosomal protein bL33 family.</text>
</comment>
<reference key="1">
    <citation type="journal article" date="2008" name="Nucleic Acids Res.">
        <title>The complete nucleotide sequences of the five genetically distinct plastid genomes of Oenothera, subsection Oenothera: I. Sequence evaluation and plastome evolution.</title>
        <authorList>
            <person name="Greiner S."/>
            <person name="Wang X."/>
            <person name="Rauwolf U."/>
            <person name="Silber M.V."/>
            <person name="Mayer K."/>
            <person name="Meurer J."/>
            <person name="Haberer G."/>
            <person name="Herrmann R.G."/>
        </authorList>
    </citation>
    <scope>NUCLEOTIDE SEQUENCE [LARGE SCALE GENOMIC DNA]</scope>
    <source>
        <strain>cv. Douthat 1</strain>
    </source>
</reference>
<sequence length="66" mass="7501">MARGKDARVTVILECTNCVRGGVTKESTGISRYITEKNRHNTPGQLELKKFCPYCYKQTIHGEIKK</sequence>
<accession>B0Z4P7</accession>
<gene>
    <name evidence="1" type="primary">rpl33</name>
</gene>
<name>RK33_OENAR</name>
<feature type="chain" id="PRO_0000356816" description="Large ribosomal subunit protein bL33c">
    <location>
        <begin position="1"/>
        <end position="66"/>
    </location>
</feature>
<keyword id="KW-0150">Chloroplast</keyword>
<keyword id="KW-0934">Plastid</keyword>
<keyword id="KW-0687">Ribonucleoprotein</keyword>
<keyword id="KW-0689">Ribosomal protein</keyword>
<evidence type="ECO:0000255" key="1">
    <source>
        <dbReference type="HAMAP-Rule" id="MF_00294"/>
    </source>
</evidence>
<evidence type="ECO:0000305" key="2"/>
<protein>
    <recommendedName>
        <fullName evidence="1">Large ribosomal subunit protein bL33c</fullName>
    </recommendedName>
    <alternativeName>
        <fullName evidence="2">50S ribosomal protein L33, chloroplastic</fullName>
    </alternativeName>
</protein>
<proteinExistence type="inferred from homology"/>
<dbReference type="EMBL" id="EU262887">
    <property type="protein sequence ID" value="ABW98725.1"/>
    <property type="molecule type" value="Genomic_DNA"/>
</dbReference>
<dbReference type="RefSeq" id="YP_001687158.1">
    <property type="nucleotide sequence ID" value="NC_010358.2"/>
</dbReference>
<dbReference type="GeneID" id="5951825"/>
<dbReference type="GO" id="GO:0009507">
    <property type="term" value="C:chloroplast"/>
    <property type="evidence" value="ECO:0007669"/>
    <property type="project" value="UniProtKB-SubCell"/>
</dbReference>
<dbReference type="GO" id="GO:1990904">
    <property type="term" value="C:ribonucleoprotein complex"/>
    <property type="evidence" value="ECO:0007669"/>
    <property type="project" value="UniProtKB-KW"/>
</dbReference>
<dbReference type="GO" id="GO:0005840">
    <property type="term" value="C:ribosome"/>
    <property type="evidence" value="ECO:0007669"/>
    <property type="project" value="UniProtKB-KW"/>
</dbReference>
<dbReference type="GO" id="GO:0003735">
    <property type="term" value="F:structural constituent of ribosome"/>
    <property type="evidence" value="ECO:0007669"/>
    <property type="project" value="InterPro"/>
</dbReference>
<dbReference type="GO" id="GO:0006412">
    <property type="term" value="P:translation"/>
    <property type="evidence" value="ECO:0007669"/>
    <property type="project" value="UniProtKB-UniRule"/>
</dbReference>
<dbReference type="Gene3D" id="2.20.28.120">
    <property type="entry name" value="Ribosomal protein L33"/>
    <property type="match status" value="1"/>
</dbReference>
<dbReference type="HAMAP" id="MF_00294">
    <property type="entry name" value="Ribosomal_bL33"/>
    <property type="match status" value="1"/>
</dbReference>
<dbReference type="InterPro" id="IPR001705">
    <property type="entry name" value="Ribosomal_bL33"/>
</dbReference>
<dbReference type="InterPro" id="IPR018264">
    <property type="entry name" value="Ribosomal_bL33_CS"/>
</dbReference>
<dbReference type="InterPro" id="IPR038584">
    <property type="entry name" value="Ribosomal_bL33_sf"/>
</dbReference>
<dbReference type="InterPro" id="IPR011332">
    <property type="entry name" value="Ribosomal_zn-bd"/>
</dbReference>
<dbReference type="NCBIfam" id="NF001764">
    <property type="entry name" value="PRK00504.1"/>
    <property type="match status" value="1"/>
</dbReference>
<dbReference type="NCBIfam" id="NF001860">
    <property type="entry name" value="PRK00595.1"/>
    <property type="match status" value="1"/>
</dbReference>
<dbReference type="NCBIfam" id="TIGR01023">
    <property type="entry name" value="rpmG_bact"/>
    <property type="match status" value="1"/>
</dbReference>
<dbReference type="PANTHER" id="PTHR43168">
    <property type="entry name" value="50S RIBOSOMAL PROTEIN L33, CHLOROPLASTIC"/>
    <property type="match status" value="1"/>
</dbReference>
<dbReference type="PANTHER" id="PTHR43168:SF2">
    <property type="entry name" value="LARGE RIBOSOMAL SUBUNIT PROTEIN BL33C"/>
    <property type="match status" value="1"/>
</dbReference>
<dbReference type="Pfam" id="PF00471">
    <property type="entry name" value="Ribosomal_L33"/>
    <property type="match status" value="1"/>
</dbReference>
<dbReference type="SUPFAM" id="SSF57829">
    <property type="entry name" value="Zn-binding ribosomal proteins"/>
    <property type="match status" value="1"/>
</dbReference>
<dbReference type="PROSITE" id="PS00582">
    <property type="entry name" value="RIBOSOMAL_L33"/>
    <property type="match status" value="1"/>
</dbReference>
<organism>
    <name type="scientific">Oenothera argillicola</name>
    <name type="common">Appalachian evening primrose</name>
    <dbReference type="NCBI Taxonomy" id="3940"/>
    <lineage>
        <taxon>Eukaryota</taxon>
        <taxon>Viridiplantae</taxon>
        <taxon>Streptophyta</taxon>
        <taxon>Embryophyta</taxon>
        <taxon>Tracheophyta</taxon>
        <taxon>Spermatophyta</taxon>
        <taxon>Magnoliopsida</taxon>
        <taxon>eudicotyledons</taxon>
        <taxon>Gunneridae</taxon>
        <taxon>Pentapetalae</taxon>
        <taxon>rosids</taxon>
        <taxon>malvids</taxon>
        <taxon>Myrtales</taxon>
        <taxon>Onagraceae</taxon>
        <taxon>Onagroideae</taxon>
        <taxon>Onagreae</taxon>
        <taxon>Oenothera</taxon>
    </lineage>
</organism>